<accession>Q7MD11</accession>
<gene>
    <name type="ordered locus">VVA1225</name>
</gene>
<dbReference type="EMBL" id="BA000038">
    <property type="protein sequence ID" value="BAC97251.1"/>
    <property type="status" value="ALT_INIT"/>
    <property type="molecule type" value="Genomic_DNA"/>
</dbReference>
<dbReference type="RefSeq" id="WP_026130919.1">
    <property type="nucleotide sequence ID" value="NC_005140.1"/>
</dbReference>
<dbReference type="SMR" id="Q7MD11"/>
<dbReference type="STRING" id="672.VV93_v1c41500"/>
<dbReference type="KEGG" id="vvy:VVA1225"/>
<dbReference type="PATRIC" id="fig|196600.6.peg.4379"/>
<dbReference type="eggNOG" id="COG3132">
    <property type="taxonomic scope" value="Bacteria"/>
</dbReference>
<dbReference type="HOGENOM" id="CLU_057831_2_0_6"/>
<dbReference type="Proteomes" id="UP000002675">
    <property type="component" value="Chromosome II"/>
</dbReference>
<dbReference type="Gene3D" id="1.10.10.10">
    <property type="entry name" value="Winged helix-like DNA-binding domain superfamily/Winged helix DNA-binding domain"/>
    <property type="match status" value="2"/>
</dbReference>
<dbReference type="HAMAP" id="MF_01584">
    <property type="entry name" value="UPF0502"/>
    <property type="match status" value="1"/>
</dbReference>
<dbReference type="InterPro" id="IPR007432">
    <property type="entry name" value="DUF480"/>
</dbReference>
<dbReference type="InterPro" id="IPR036388">
    <property type="entry name" value="WH-like_DNA-bd_sf"/>
</dbReference>
<dbReference type="InterPro" id="IPR036390">
    <property type="entry name" value="WH_DNA-bd_sf"/>
</dbReference>
<dbReference type="PANTHER" id="PTHR38768">
    <property type="entry name" value="UPF0502 PROTEIN YCEH"/>
    <property type="match status" value="1"/>
</dbReference>
<dbReference type="PANTHER" id="PTHR38768:SF1">
    <property type="entry name" value="UPF0502 PROTEIN YCEH"/>
    <property type="match status" value="1"/>
</dbReference>
<dbReference type="Pfam" id="PF04337">
    <property type="entry name" value="DUF480"/>
    <property type="match status" value="1"/>
</dbReference>
<dbReference type="SUPFAM" id="SSF46785">
    <property type="entry name" value="Winged helix' DNA-binding domain"/>
    <property type="match status" value="2"/>
</dbReference>
<name>Y5225_VIBVY</name>
<protein>
    <recommendedName>
        <fullName evidence="1">UPF0502 protein VVA1225</fullName>
    </recommendedName>
</protein>
<organism>
    <name type="scientific">Vibrio vulnificus (strain YJ016)</name>
    <dbReference type="NCBI Taxonomy" id="196600"/>
    <lineage>
        <taxon>Bacteria</taxon>
        <taxon>Pseudomonadati</taxon>
        <taxon>Pseudomonadota</taxon>
        <taxon>Gammaproteobacteria</taxon>
        <taxon>Vibrionales</taxon>
        <taxon>Vibrionaceae</taxon>
        <taxon>Vibrio</taxon>
    </lineage>
</organism>
<feature type="chain" id="PRO_0000309443" description="UPF0502 protein VVA1225">
    <location>
        <begin position="1"/>
        <end position="220"/>
    </location>
</feature>
<reference key="1">
    <citation type="journal article" date="2003" name="Genome Res.">
        <title>Comparative genome analysis of Vibrio vulnificus, a marine pathogen.</title>
        <authorList>
            <person name="Chen C.-Y."/>
            <person name="Wu K.-M."/>
            <person name="Chang Y.-C."/>
            <person name="Chang C.-H."/>
            <person name="Tsai H.-C."/>
            <person name="Liao T.-L."/>
            <person name="Liu Y.-M."/>
            <person name="Chen H.-J."/>
            <person name="Shen A.B.-T."/>
            <person name="Li J.-C."/>
            <person name="Su T.-L."/>
            <person name="Shao C.-P."/>
            <person name="Lee C.-T."/>
            <person name="Hor L.-I."/>
            <person name="Tsai S.-F."/>
        </authorList>
    </citation>
    <scope>NUCLEOTIDE SEQUENCE [LARGE SCALE GENOMIC DNA]</scope>
    <source>
        <strain>YJ016</strain>
    </source>
</reference>
<proteinExistence type="inferred from homology"/>
<sequence length="220" mass="24563">MRTELTPIEARVIGCLIEKEVTTPDQYPLSLNALTNACNQKSNREPVMSLSESEVLDAVDQLISRRLVSDESGFNSRVSKYQHRFCNTEFGDLKLSAQEKGIVCCMLLRGPQTPGELRTRTNRLATFADVKEVETVLDKLASEERGQLVVKLPIEPGKRESRYMHQFCGEVDLDAFQGSALMTASSTAQFDDERVAHLEAEVEALKQELAELKSLVNSLL</sequence>
<comment type="similarity">
    <text evidence="1">Belongs to the UPF0502 family.</text>
</comment>
<comment type="sequence caution" evidence="2">
    <conflict type="erroneous initiation">
        <sequence resource="EMBL-CDS" id="BAC97251"/>
    </conflict>
</comment>
<evidence type="ECO:0000255" key="1">
    <source>
        <dbReference type="HAMAP-Rule" id="MF_01584"/>
    </source>
</evidence>
<evidence type="ECO:0000305" key="2"/>